<proteinExistence type="inferred from homology"/>
<name>XERD_BRUSU</name>
<keyword id="KW-0131">Cell cycle</keyword>
<keyword id="KW-0132">Cell division</keyword>
<keyword id="KW-0159">Chromosome partition</keyword>
<keyword id="KW-0963">Cytoplasm</keyword>
<keyword id="KW-0229">DNA integration</keyword>
<keyword id="KW-0233">DNA recombination</keyword>
<keyword id="KW-0238">DNA-binding</keyword>
<feature type="chain" id="PRO_0000095377" description="Tyrosine recombinase XerD">
    <location>
        <begin position="1"/>
        <end position="309"/>
    </location>
</feature>
<feature type="domain" description="Core-binding (CB)" evidence="3">
    <location>
        <begin position="3"/>
        <end position="88"/>
    </location>
</feature>
<feature type="domain" description="Tyr recombinase" evidence="2">
    <location>
        <begin position="109"/>
        <end position="302"/>
    </location>
</feature>
<feature type="active site" evidence="1">
    <location>
        <position position="158"/>
    </location>
</feature>
<feature type="active site" evidence="1">
    <location>
        <position position="182"/>
    </location>
</feature>
<feature type="active site" evidence="1">
    <location>
        <position position="254"/>
    </location>
</feature>
<feature type="active site" evidence="1">
    <location>
        <position position="257"/>
    </location>
</feature>
<feature type="active site" evidence="1">
    <location>
        <position position="280"/>
    </location>
</feature>
<feature type="active site" description="O-(3'-phospho-DNA)-tyrosine intermediate" evidence="1">
    <location>
        <position position="289"/>
    </location>
</feature>
<evidence type="ECO:0000255" key="1">
    <source>
        <dbReference type="HAMAP-Rule" id="MF_01807"/>
    </source>
</evidence>
<evidence type="ECO:0000255" key="2">
    <source>
        <dbReference type="PROSITE-ProRule" id="PRU01246"/>
    </source>
</evidence>
<evidence type="ECO:0000255" key="3">
    <source>
        <dbReference type="PROSITE-ProRule" id="PRU01248"/>
    </source>
</evidence>
<evidence type="ECO:0000305" key="4"/>
<gene>
    <name evidence="1" type="primary">xerD</name>
    <name type="ordered locus">BR2031</name>
    <name type="ordered locus">BS1330_I2025</name>
</gene>
<organism>
    <name type="scientific">Brucella suis biovar 1 (strain 1330)</name>
    <dbReference type="NCBI Taxonomy" id="204722"/>
    <lineage>
        <taxon>Bacteria</taxon>
        <taxon>Pseudomonadati</taxon>
        <taxon>Pseudomonadota</taxon>
        <taxon>Alphaproteobacteria</taxon>
        <taxon>Hyphomicrobiales</taxon>
        <taxon>Brucellaceae</taxon>
        <taxon>Brucella/Ochrobactrum group</taxon>
        <taxon>Brucella</taxon>
    </lineage>
</organism>
<dbReference type="EMBL" id="AE014291">
    <property type="protein sequence ID" value="AAN30921.1"/>
    <property type="status" value="ALT_INIT"/>
    <property type="molecule type" value="Genomic_DNA"/>
</dbReference>
<dbReference type="EMBL" id="CP002997">
    <property type="protein sequence ID" value="AEM19338.1"/>
    <property type="status" value="ALT_INIT"/>
    <property type="molecule type" value="Genomic_DNA"/>
</dbReference>
<dbReference type="SMR" id="Q7ZAN6"/>
<dbReference type="KEGG" id="bms:BR2031"/>
<dbReference type="KEGG" id="bsi:BS1330_I2025"/>
<dbReference type="HOGENOM" id="CLU_027562_9_0_5"/>
<dbReference type="PRO" id="PR:Q7ZAN6"/>
<dbReference type="Proteomes" id="UP000007104">
    <property type="component" value="Chromosome I"/>
</dbReference>
<dbReference type="GO" id="GO:0005737">
    <property type="term" value="C:cytoplasm"/>
    <property type="evidence" value="ECO:0007669"/>
    <property type="project" value="UniProtKB-SubCell"/>
</dbReference>
<dbReference type="GO" id="GO:0003677">
    <property type="term" value="F:DNA binding"/>
    <property type="evidence" value="ECO:0007669"/>
    <property type="project" value="UniProtKB-KW"/>
</dbReference>
<dbReference type="GO" id="GO:0009037">
    <property type="term" value="F:tyrosine-based site-specific recombinase activity"/>
    <property type="evidence" value="ECO:0007669"/>
    <property type="project" value="UniProtKB-UniRule"/>
</dbReference>
<dbReference type="GO" id="GO:0051301">
    <property type="term" value="P:cell division"/>
    <property type="evidence" value="ECO:0007669"/>
    <property type="project" value="UniProtKB-KW"/>
</dbReference>
<dbReference type="GO" id="GO:0007059">
    <property type="term" value="P:chromosome segregation"/>
    <property type="evidence" value="ECO:0007669"/>
    <property type="project" value="UniProtKB-UniRule"/>
</dbReference>
<dbReference type="GO" id="GO:0006313">
    <property type="term" value="P:DNA transposition"/>
    <property type="evidence" value="ECO:0007669"/>
    <property type="project" value="UniProtKB-UniRule"/>
</dbReference>
<dbReference type="Gene3D" id="1.10.150.130">
    <property type="match status" value="1"/>
</dbReference>
<dbReference type="Gene3D" id="1.10.443.10">
    <property type="entry name" value="Intergrase catalytic core"/>
    <property type="match status" value="1"/>
</dbReference>
<dbReference type="HAMAP" id="MF_01808">
    <property type="entry name" value="Recomb_XerC_XerD"/>
    <property type="match status" value="1"/>
</dbReference>
<dbReference type="HAMAP" id="MF_01807">
    <property type="entry name" value="Recomb_XerD"/>
    <property type="match status" value="1"/>
</dbReference>
<dbReference type="InterPro" id="IPR044068">
    <property type="entry name" value="CB"/>
</dbReference>
<dbReference type="InterPro" id="IPR011010">
    <property type="entry name" value="DNA_brk_join_enz"/>
</dbReference>
<dbReference type="InterPro" id="IPR013762">
    <property type="entry name" value="Integrase-like_cat_sf"/>
</dbReference>
<dbReference type="InterPro" id="IPR002104">
    <property type="entry name" value="Integrase_catalytic"/>
</dbReference>
<dbReference type="InterPro" id="IPR010998">
    <property type="entry name" value="Integrase_recombinase_N"/>
</dbReference>
<dbReference type="InterPro" id="IPR004107">
    <property type="entry name" value="Integrase_SAM-like_N"/>
</dbReference>
<dbReference type="InterPro" id="IPR011932">
    <property type="entry name" value="Recomb_XerD"/>
</dbReference>
<dbReference type="InterPro" id="IPR023009">
    <property type="entry name" value="Tyrosine_recombinase_XerC/XerD"/>
</dbReference>
<dbReference type="InterPro" id="IPR050090">
    <property type="entry name" value="Tyrosine_recombinase_XerCD"/>
</dbReference>
<dbReference type="NCBIfam" id="NF001399">
    <property type="entry name" value="PRK00283.1"/>
    <property type="match status" value="1"/>
</dbReference>
<dbReference type="NCBIfam" id="TIGR02225">
    <property type="entry name" value="recomb_XerD"/>
    <property type="match status" value="1"/>
</dbReference>
<dbReference type="PANTHER" id="PTHR30349">
    <property type="entry name" value="PHAGE INTEGRASE-RELATED"/>
    <property type="match status" value="1"/>
</dbReference>
<dbReference type="PANTHER" id="PTHR30349:SF90">
    <property type="entry name" value="TYROSINE RECOMBINASE XERD"/>
    <property type="match status" value="1"/>
</dbReference>
<dbReference type="Pfam" id="PF02899">
    <property type="entry name" value="Phage_int_SAM_1"/>
    <property type="match status" value="1"/>
</dbReference>
<dbReference type="Pfam" id="PF00589">
    <property type="entry name" value="Phage_integrase"/>
    <property type="match status" value="1"/>
</dbReference>
<dbReference type="SUPFAM" id="SSF56349">
    <property type="entry name" value="DNA breaking-rejoining enzymes"/>
    <property type="match status" value="1"/>
</dbReference>
<dbReference type="PROSITE" id="PS51900">
    <property type="entry name" value="CB"/>
    <property type="match status" value="1"/>
</dbReference>
<dbReference type="PROSITE" id="PS51898">
    <property type="entry name" value="TYR_RECOMBINASE"/>
    <property type="match status" value="1"/>
</dbReference>
<comment type="function">
    <text evidence="1">Site-specific tyrosine recombinase, which acts by catalyzing the cutting and rejoining of the recombining DNA molecules. The XerC-XerD complex is essential to convert dimers of the bacterial chromosome into monomers to permit their segregation at cell division. It also contributes to the segregational stability of plasmids.</text>
</comment>
<comment type="subunit">
    <text evidence="1">Forms a cyclic heterotetrameric complex composed of two molecules of XerC and two molecules of XerD.</text>
</comment>
<comment type="subcellular location">
    <subcellularLocation>
        <location evidence="1">Cytoplasm</location>
    </subcellularLocation>
</comment>
<comment type="similarity">
    <text evidence="1">Belongs to the 'phage' integrase family. XerD subfamily.</text>
</comment>
<comment type="sequence caution" evidence="4">
    <conflict type="erroneous initiation">
        <sequence resource="EMBL-CDS" id="AAN30921"/>
    </conflict>
</comment>
<comment type="sequence caution" evidence="4">
    <conflict type="erroneous initiation">
        <sequence resource="EMBL-CDS" id="AEM19338"/>
    </conflict>
    <text>Truncated N-terminus.</text>
</comment>
<accession>Q7ZAN6</accession>
<accession>G0K8Q1</accession>
<reference key="1">
    <citation type="journal article" date="2002" name="Proc. Natl. Acad. Sci. U.S.A.">
        <title>The Brucella suis genome reveals fundamental similarities between animal and plant pathogens and symbionts.</title>
        <authorList>
            <person name="Paulsen I.T."/>
            <person name="Seshadri R."/>
            <person name="Nelson K.E."/>
            <person name="Eisen J.A."/>
            <person name="Heidelberg J.F."/>
            <person name="Read T.D."/>
            <person name="Dodson R.J."/>
            <person name="Umayam L.A."/>
            <person name="Brinkac L.M."/>
            <person name="Beanan M.J."/>
            <person name="Daugherty S.C."/>
            <person name="DeBoy R.T."/>
            <person name="Durkin A.S."/>
            <person name="Kolonay J.F."/>
            <person name="Madupu R."/>
            <person name="Nelson W.C."/>
            <person name="Ayodeji B."/>
            <person name="Kraul M."/>
            <person name="Shetty J."/>
            <person name="Malek J.A."/>
            <person name="Van Aken S.E."/>
            <person name="Riedmuller S."/>
            <person name="Tettelin H."/>
            <person name="Gill S.R."/>
            <person name="White O."/>
            <person name="Salzberg S.L."/>
            <person name="Hoover D.L."/>
            <person name="Lindler L.E."/>
            <person name="Halling S.M."/>
            <person name="Boyle S.M."/>
            <person name="Fraser C.M."/>
        </authorList>
    </citation>
    <scope>NUCLEOTIDE SEQUENCE [LARGE SCALE GENOMIC DNA]</scope>
    <source>
        <strain>1330</strain>
    </source>
</reference>
<reference key="2">
    <citation type="journal article" date="2011" name="J. Bacteriol.">
        <title>Revised genome sequence of Brucella suis 1330.</title>
        <authorList>
            <person name="Tae H."/>
            <person name="Shallom S."/>
            <person name="Settlage R."/>
            <person name="Preston D."/>
            <person name="Adams L.G."/>
            <person name="Garner H.R."/>
        </authorList>
    </citation>
    <scope>NUCLEOTIDE SEQUENCE [LARGE SCALE GENOMIC DNA]</scope>
    <source>
        <strain>1330</strain>
    </source>
</reference>
<sequence>MTMRASLAIENFLEMMSAERGAAQNTLESYRRDLEAAAEELAAKGVNLAEAETGHIRMTLDTMAAQGFAPTSQARRLSALRQFFRFLYSEGFRQDDPTGILDAPKKQKPLPKIMSVENVGRLLDRAALEANEAAEPGERIKALRLHALLETLYATGLRVSELVGLPVTVARTDHRFLLVRGKGSKDRMVPLSRKARDALQKFLTLRDSLPGSDDNPWLFPAFSESGHLARQVFARELKGLAARAGLAASSVSPHVLRHAFASHLLQNGADLRTVQQLLGHADISTTQIYTHVLEERLHKLVSEHHPLAD</sequence>
<protein>
    <recommendedName>
        <fullName evidence="1">Tyrosine recombinase XerD</fullName>
    </recommendedName>
</protein>